<keyword id="KW-0025">Alternative splicing</keyword>
<keyword id="KW-0067">ATP-binding</keyword>
<keyword id="KW-0158">Chromosome</keyword>
<keyword id="KW-0547">Nucleotide-binding</keyword>
<keyword id="KW-0539">Nucleus</keyword>
<keyword id="KW-1267">Proteomics identification</keyword>
<keyword id="KW-1185">Reference proteome</keyword>
<keyword id="KW-0677">Repeat</keyword>
<keyword id="KW-0687">Ribonucleoprotein</keyword>
<keyword id="KW-0694">RNA-binding</keyword>
<keyword id="KW-0779">Telomere</keyword>
<keyword id="KW-0853">WD repeat</keyword>
<accession>Q99973</accession>
<accession>A0AUV9</accession>
<protein>
    <recommendedName>
        <fullName>Telomerase protein component 1</fullName>
    </recommendedName>
    <alternativeName>
        <fullName>Telomerase-associated protein 1</fullName>
        <shortName>Telomerase protein 1</shortName>
    </alternativeName>
    <alternativeName>
        <fullName>p240</fullName>
    </alternativeName>
    <alternativeName>
        <fullName>p80 telomerase homolog</fullName>
    </alternativeName>
</protein>
<name>TEP1_HUMAN</name>
<proteinExistence type="evidence at protein level"/>
<evidence type="ECO:0000250" key="1">
    <source>
        <dbReference type="UniProtKB" id="P97499"/>
    </source>
</evidence>
<evidence type="ECO:0000255" key="2">
    <source>
        <dbReference type="PROSITE-ProRule" id="PRU00136"/>
    </source>
</evidence>
<evidence type="ECO:0000255" key="3">
    <source>
        <dbReference type="PROSITE-ProRule" id="PRU00343"/>
    </source>
</evidence>
<evidence type="ECO:0000256" key="4">
    <source>
        <dbReference type="SAM" id="MobiDB-lite"/>
    </source>
</evidence>
<evidence type="ECO:0000269" key="5">
    <source>
    </source>
</evidence>
<evidence type="ECO:0000269" key="6">
    <source>
    </source>
</evidence>
<evidence type="ECO:0000303" key="7">
    <source>
    </source>
</evidence>
<evidence type="ECO:0000305" key="8"/>
<comment type="function">
    <text evidence="1 5">Component of the telomerase ribonucleoprotein complex that is essential for the replication of chromosome termini (PubMed:19179534). Also a component of the ribonucleoprotein vaults particle, a multi-subunit structure involved in nucleo-cytoplasmic transport (By similarity). Responsible for the localizing and stabilizing vault RNA (vRNA) association in the vault ribonucleoprotein particle. Binds to TERC (By similarity).</text>
</comment>
<comment type="subunit">
    <text evidence="1 5">Associated component of the telomerase holoenzyme complex (PubMed:19179534). Component of the vault ribonucleoprotein particle, at least composed of MVP, PARP4 and one or more vault RNAs (vRNAs) (By similarity). Binds to VAULTRC1, VAULTRC2 and VAULTRC4/hvg4 vRNAs (By similarity).</text>
</comment>
<comment type="interaction">
    <interactant intactId="EBI-947859">
        <id>Q99973</id>
    </interactant>
    <interactant intactId="EBI-372094">
        <id>Q9BQY4</id>
        <label>RHOXF2</label>
    </interactant>
    <organismsDiffer>false</organismsDiffer>
    <experiments>3</experiments>
</comment>
<comment type="interaction">
    <interactant intactId="EBI-947859">
        <id>Q99973</id>
    </interactant>
    <interactant intactId="EBI-2514383">
        <id>Q5T6F2</id>
        <label>UBAP2</label>
    </interactant>
    <organismsDiffer>false</organismsDiffer>
    <experiments>3</experiments>
</comment>
<comment type="subcellular location">
    <subcellularLocation>
        <location evidence="8">Nucleus</location>
    </subcellularLocation>
    <subcellularLocation>
        <location>Chromosome</location>
        <location>Telomere</location>
    </subcellularLocation>
</comment>
<comment type="alternative products">
    <event type="alternative splicing"/>
    <isoform>
        <id>Q99973-1</id>
        <name>1</name>
        <sequence type="displayed"/>
    </isoform>
    <isoform>
        <id>Q99973-2</id>
        <name>2</name>
        <sequence type="described" ref="VSP_010359"/>
    </isoform>
</comment>
<comment type="tissue specificity">
    <text evidence="6">Ubiquitous.</text>
</comment>
<comment type="miscellaneous">
    <molecule>Isoform 2</molecule>
    <text evidence="8">May be due to an exon inclusion.</text>
</comment>
<organism>
    <name type="scientific">Homo sapiens</name>
    <name type="common">Human</name>
    <dbReference type="NCBI Taxonomy" id="9606"/>
    <lineage>
        <taxon>Eukaryota</taxon>
        <taxon>Metazoa</taxon>
        <taxon>Chordata</taxon>
        <taxon>Craniata</taxon>
        <taxon>Vertebrata</taxon>
        <taxon>Euteleostomi</taxon>
        <taxon>Mammalia</taxon>
        <taxon>Eutheria</taxon>
        <taxon>Euarchontoglires</taxon>
        <taxon>Primates</taxon>
        <taxon>Haplorrhini</taxon>
        <taxon>Catarrhini</taxon>
        <taxon>Hominidae</taxon>
        <taxon>Homo</taxon>
    </lineage>
</organism>
<reference key="1">
    <citation type="journal article" date="1997" name="Science">
        <title>A mammalian telomerase-associated protein.</title>
        <authorList>
            <person name="Harrington L."/>
            <person name="McPhail T."/>
            <person name="Mar V."/>
            <person name="Zhou W."/>
            <person name="Oulton R."/>
            <person name="Bass M.B."/>
            <person name="Arruda I."/>
            <person name="Robinson M.O."/>
        </authorList>
    </citation>
    <scope>NUCLEOTIDE SEQUENCE [MRNA] (ISOFORM 1)</scope>
    <scope>TISSUE SPECIFICITY</scope>
    <scope>VARIANTS PRO-116; GLY-553; CYS-1055; GLN-1155 AND PRO-1195</scope>
</reference>
<reference key="2">
    <citation type="journal article" date="2004" name="Genome Res.">
        <title>The status, quality, and expansion of the NIH full-length cDNA project: the Mammalian Gene Collection (MGC).</title>
        <authorList>
            <consortium name="The MGC Project Team"/>
        </authorList>
    </citation>
    <scope>NUCLEOTIDE SEQUENCE [LARGE SCALE MRNA] (ISOFORM 1)</scope>
    <source>
        <tissue>Cerebellum</tissue>
    </source>
</reference>
<reference key="3">
    <citation type="journal article" date="2007" name="BMC Genomics">
        <title>The full-ORF clone resource of the German cDNA consortium.</title>
        <authorList>
            <person name="Bechtel S."/>
            <person name="Rosenfelder H."/>
            <person name="Duda A."/>
            <person name="Schmidt C.P."/>
            <person name="Ernst U."/>
            <person name="Wellenreuther R."/>
            <person name="Mehrle A."/>
            <person name="Schuster C."/>
            <person name="Bahr A."/>
            <person name="Bloecker H."/>
            <person name="Heubner D."/>
            <person name="Hoerlein A."/>
            <person name="Michel G."/>
            <person name="Wedler H."/>
            <person name="Koehrer K."/>
            <person name="Ottenwaelder B."/>
            <person name="Poustka A."/>
            <person name="Wiemann S."/>
            <person name="Schupp I."/>
        </authorList>
    </citation>
    <scope>NUCLEOTIDE SEQUENCE [LARGE SCALE MRNA] OF 2288-2627 (ISOFORM 2)</scope>
    <source>
        <tissue>Salivary gland</tissue>
    </source>
</reference>
<reference key="4">
    <citation type="journal article" date="1997" name="Genes Dev.">
        <title>Human telomerase contains evolutionarily conserved catalytic and structural subunits.</title>
        <authorList>
            <person name="Harrington L."/>
            <person name="Zhou W."/>
            <person name="McPhail T."/>
            <person name="Oulton R."/>
            <person name="Yeung D.S."/>
            <person name="Mar V."/>
            <person name="Bass M.B."/>
            <person name="Robinson M.O."/>
        </authorList>
    </citation>
    <scope>IDENTIFICATION IN THE TELOMERASE RIBONUCLEOPROTEIN COMPLEX</scope>
</reference>
<reference key="5">
    <citation type="journal article" date="1999" name="J. Biol. Chem.">
        <title>Vaults and telomerase share a common subunit, TEP1.</title>
        <authorList>
            <person name="Kickhoefer V.A."/>
            <person name="Stephen A.G."/>
            <person name="Harrington L."/>
            <person name="Robinson M.O."/>
            <person name="Rome L.H."/>
        </authorList>
    </citation>
    <scope>IDENTIFICATION IN THE VAULTS RIBONUCLEOPROTEIN PARTICLE</scope>
    <scope>RNA-BINDING</scope>
</reference>
<reference key="6">
    <citation type="journal article" date="2000" name="Mol. Biol. Cell">
        <title>Polymerization defects within human telomerase are distinct from telomerase RNA and TEP1 binding.</title>
        <authorList>
            <person name="Beattie T.L."/>
            <person name="Zhou W."/>
            <person name="Robinson M.O."/>
            <person name="Harrington L."/>
        </authorList>
    </citation>
    <scope>IDENTIFICATION IN THE TELOMERASE RIBONUCLEOPROTEIN COMPLEX</scope>
</reference>
<reference key="7">
    <citation type="journal article" date="2009" name="Science">
        <title>A human telomerase holoenzyme protein required for Cajal body localization and telomere synthesis.</title>
        <authorList>
            <person name="Venteicher A.S."/>
            <person name="Abreu E.B."/>
            <person name="Meng Z."/>
            <person name="McCann K.E."/>
            <person name="Terns R.M."/>
            <person name="Veenstra T.D."/>
            <person name="Terns M.P."/>
            <person name="Artandi S.E."/>
        </authorList>
    </citation>
    <scope>IDENTIFICATION IN THE TELOMERASE HOLOENZYME COMPLEX</scope>
</reference>
<gene>
    <name type="primary">TEP1</name>
    <name type="synonym">TLP1</name>
    <name type="synonym">TP1</name>
</gene>
<dbReference type="EMBL" id="U86136">
    <property type="protein sequence ID" value="AAC51107.1"/>
    <property type="molecule type" value="mRNA"/>
</dbReference>
<dbReference type="EMBL" id="BC126107">
    <property type="protein sequence ID" value="AAI26108.1"/>
    <property type="molecule type" value="mRNA"/>
</dbReference>
<dbReference type="EMBL" id="BX640983">
    <property type="protein sequence ID" value="CAE45993.1"/>
    <property type="molecule type" value="mRNA"/>
</dbReference>
<dbReference type="CCDS" id="CCDS9548.1">
    <molecule id="Q99973-1"/>
</dbReference>
<dbReference type="RefSeq" id="NP_009041.2">
    <molecule id="Q99973-1"/>
    <property type="nucleotide sequence ID" value="NM_007110.4"/>
</dbReference>
<dbReference type="RefSeq" id="XP_005268084.1">
    <molecule id="Q99973-1"/>
    <property type="nucleotide sequence ID" value="XM_005268027.6"/>
</dbReference>
<dbReference type="RefSeq" id="XP_054189120.1">
    <molecule id="Q99973-1"/>
    <property type="nucleotide sequence ID" value="XM_054333145.1"/>
</dbReference>
<dbReference type="RefSeq" id="XP_054232628.1">
    <molecule id="Q99973-1"/>
    <property type="nucleotide sequence ID" value="XM_054376653.1"/>
</dbReference>
<dbReference type="SMR" id="Q99973"/>
<dbReference type="BioGRID" id="112870">
    <property type="interactions" value="61"/>
</dbReference>
<dbReference type="ComplexPortal" id="CPX-10181">
    <property type="entry name" value="Vault ribonucleoprotein complex"/>
</dbReference>
<dbReference type="FunCoup" id="Q99973">
    <property type="interactions" value="130"/>
</dbReference>
<dbReference type="IntAct" id="Q99973">
    <property type="interactions" value="25"/>
</dbReference>
<dbReference type="STRING" id="9606.ENSP00000262715"/>
<dbReference type="BindingDB" id="Q99973"/>
<dbReference type="GlyGen" id="Q99973">
    <property type="glycosylation" value="3 sites, 1 O-linked glycan (3 sites)"/>
</dbReference>
<dbReference type="iPTMnet" id="Q99973"/>
<dbReference type="PhosphoSitePlus" id="Q99973"/>
<dbReference type="SwissPalm" id="Q99973"/>
<dbReference type="BioMuta" id="TEP1"/>
<dbReference type="DMDM" id="215273899"/>
<dbReference type="jPOST" id="Q99973"/>
<dbReference type="MassIVE" id="Q99973"/>
<dbReference type="PaxDb" id="9606-ENSP00000262715"/>
<dbReference type="PeptideAtlas" id="Q99973"/>
<dbReference type="ProteomicsDB" id="78559">
    <molecule id="Q99973-1"/>
</dbReference>
<dbReference type="ProteomicsDB" id="78560">
    <molecule id="Q99973-2"/>
</dbReference>
<dbReference type="Pumba" id="Q99973"/>
<dbReference type="Antibodypedia" id="6875">
    <property type="antibodies" value="99 antibodies from 28 providers"/>
</dbReference>
<dbReference type="DNASU" id="7011"/>
<dbReference type="Ensembl" id="ENST00000262715.10">
    <molecule id="Q99973-1"/>
    <property type="protein sequence ID" value="ENSP00000262715.5"/>
    <property type="gene ID" value="ENSG00000129566.13"/>
</dbReference>
<dbReference type="Ensembl" id="ENST00000708760.1">
    <molecule id="Q99973-1"/>
    <property type="protein sequence ID" value="ENSP00000517324.1"/>
    <property type="gene ID" value="ENSG00000291791.1"/>
</dbReference>
<dbReference type="GeneID" id="7011"/>
<dbReference type="KEGG" id="hsa:7011"/>
<dbReference type="MANE-Select" id="ENST00000262715.10">
    <property type="protein sequence ID" value="ENSP00000262715.5"/>
    <property type="RefSeq nucleotide sequence ID" value="NM_007110.5"/>
    <property type="RefSeq protein sequence ID" value="NP_009041.2"/>
</dbReference>
<dbReference type="UCSC" id="uc001vxe.4">
    <molecule id="Q99973-1"/>
    <property type="organism name" value="human"/>
</dbReference>
<dbReference type="AGR" id="HGNC:11726"/>
<dbReference type="CTD" id="7011"/>
<dbReference type="DisGeNET" id="7011"/>
<dbReference type="GeneCards" id="TEP1"/>
<dbReference type="HGNC" id="HGNC:11726">
    <property type="gene designation" value="TEP1"/>
</dbReference>
<dbReference type="HPA" id="ENSG00000129566">
    <property type="expression patterns" value="Low tissue specificity"/>
</dbReference>
<dbReference type="MIM" id="601686">
    <property type="type" value="gene"/>
</dbReference>
<dbReference type="neXtProt" id="NX_Q99973"/>
<dbReference type="OpenTargets" id="ENSG00000129566"/>
<dbReference type="PharmGKB" id="PA36443"/>
<dbReference type="VEuPathDB" id="HostDB:ENSG00000129566"/>
<dbReference type="eggNOG" id="KOG3602">
    <property type="taxonomic scope" value="Eukaryota"/>
</dbReference>
<dbReference type="eggNOG" id="KOG4155">
    <property type="taxonomic scope" value="Eukaryota"/>
</dbReference>
<dbReference type="GeneTree" id="ENSGT00940000161338"/>
<dbReference type="InParanoid" id="Q99973"/>
<dbReference type="OMA" id="WQILPKG"/>
<dbReference type="OrthoDB" id="427368at2759"/>
<dbReference type="PAN-GO" id="Q99973">
    <property type="GO annotations" value="4 GO annotations based on evolutionary models"/>
</dbReference>
<dbReference type="PhylomeDB" id="Q99973"/>
<dbReference type="TreeFam" id="TF328424"/>
<dbReference type="PathwayCommons" id="Q99973"/>
<dbReference type="SignaLink" id="Q99973"/>
<dbReference type="BioGRID-ORCS" id="7011">
    <property type="hits" value="4 hits in 1159 CRISPR screens"/>
</dbReference>
<dbReference type="ChiTaRS" id="TEP1">
    <property type="organism name" value="human"/>
</dbReference>
<dbReference type="GeneWiki" id="TEP1"/>
<dbReference type="GenomeRNAi" id="7011"/>
<dbReference type="Pharos" id="Q99973">
    <property type="development level" value="Tbio"/>
</dbReference>
<dbReference type="PRO" id="PR:Q99973"/>
<dbReference type="Proteomes" id="UP000005640">
    <property type="component" value="Chromosome 14"/>
</dbReference>
<dbReference type="RNAct" id="Q99973">
    <property type="molecule type" value="protein"/>
</dbReference>
<dbReference type="Bgee" id="ENSG00000129566">
    <property type="expression patterns" value="Expressed in monocyte and 161 other cell types or tissues"/>
</dbReference>
<dbReference type="ExpressionAtlas" id="Q99973">
    <property type="expression patterns" value="baseline and differential"/>
</dbReference>
<dbReference type="GO" id="GO:0000781">
    <property type="term" value="C:chromosome, telomeric region"/>
    <property type="evidence" value="ECO:0007669"/>
    <property type="project" value="UniProtKB-SubCell"/>
</dbReference>
<dbReference type="GO" id="GO:0005737">
    <property type="term" value="C:cytoplasm"/>
    <property type="evidence" value="ECO:0000314"/>
    <property type="project" value="MGI"/>
</dbReference>
<dbReference type="GO" id="GO:0016363">
    <property type="term" value="C:nuclear matrix"/>
    <property type="evidence" value="ECO:0000314"/>
    <property type="project" value="MGI"/>
</dbReference>
<dbReference type="GO" id="GO:1990904">
    <property type="term" value="C:ribonucleoprotein complex"/>
    <property type="evidence" value="ECO:0000304"/>
    <property type="project" value="UniProtKB"/>
</dbReference>
<dbReference type="GO" id="GO:0005697">
    <property type="term" value="C:telomerase holoenzyme complex"/>
    <property type="evidence" value="ECO:0000314"/>
    <property type="project" value="UniProtKB"/>
</dbReference>
<dbReference type="GO" id="GO:0005524">
    <property type="term" value="F:ATP binding"/>
    <property type="evidence" value="ECO:0007669"/>
    <property type="project" value="UniProtKB-KW"/>
</dbReference>
<dbReference type="GO" id="GO:0019899">
    <property type="term" value="F:enzyme binding"/>
    <property type="evidence" value="ECO:0000353"/>
    <property type="project" value="BHF-UCL"/>
</dbReference>
<dbReference type="GO" id="GO:0002039">
    <property type="term" value="F:p53 binding"/>
    <property type="evidence" value="ECO:0000353"/>
    <property type="project" value="BHF-UCL"/>
</dbReference>
<dbReference type="GO" id="GO:0003723">
    <property type="term" value="F:RNA binding"/>
    <property type="evidence" value="ECO:0000250"/>
    <property type="project" value="UniProtKB"/>
</dbReference>
<dbReference type="GO" id="GO:0003720">
    <property type="term" value="F:telomerase activity"/>
    <property type="evidence" value="ECO:0007669"/>
    <property type="project" value="Ensembl"/>
</dbReference>
<dbReference type="GO" id="GO:0070034">
    <property type="term" value="F:telomerase RNA binding"/>
    <property type="evidence" value="ECO:0000250"/>
    <property type="project" value="BHF-UCL"/>
</dbReference>
<dbReference type="GO" id="GO:0000722">
    <property type="term" value="P:telomere maintenance via recombination"/>
    <property type="evidence" value="ECO:0000314"/>
    <property type="project" value="UniProtKB"/>
</dbReference>
<dbReference type="CDD" id="cd00200">
    <property type="entry name" value="WD40"/>
    <property type="match status" value="1"/>
</dbReference>
<dbReference type="FunFam" id="1.25.40.370:FF:000002">
    <property type="entry name" value="Telomerase associated protein 1"/>
    <property type="match status" value="1"/>
</dbReference>
<dbReference type="FunFam" id="2.130.10.10:FF:000636">
    <property type="entry name" value="Telomerase protein component 1"/>
    <property type="match status" value="1"/>
</dbReference>
<dbReference type="FunFam" id="2.130.10.10:FF:000653">
    <property type="entry name" value="Telomerase protein component 1"/>
    <property type="match status" value="1"/>
</dbReference>
<dbReference type="FunFam" id="2.130.10.10:FF:000691">
    <property type="entry name" value="Telomerase protein component 1"/>
    <property type="match status" value="1"/>
</dbReference>
<dbReference type="FunFam" id="2.130.10.10:FF:001303">
    <property type="entry name" value="Telomerase protein component 1"/>
    <property type="match status" value="1"/>
</dbReference>
<dbReference type="FunFam" id="2.130.10.10:FF:001849">
    <property type="entry name" value="Telomerase protein component 1"/>
    <property type="match status" value="1"/>
</dbReference>
<dbReference type="FunFam" id="2.130.10.10:FF:001218">
    <property type="entry name" value="TEP1 isoform 2"/>
    <property type="match status" value="1"/>
</dbReference>
<dbReference type="Gene3D" id="1.25.40.370">
    <property type="match status" value="1"/>
</dbReference>
<dbReference type="Gene3D" id="3.40.50.300">
    <property type="entry name" value="P-loop containing nucleotide triphosphate hydrolases"/>
    <property type="match status" value="1"/>
</dbReference>
<dbReference type="Gene3D" id="2.130.10.10">
    <property type="entry name" value="YVTN repeat-like/Quinoprotein amine dehydrogenase"/>
    <property type="match status" value="6"/>
</dbReference>
<dbReference type="InterPro" id="IPR056829">
    <property type="entry name" value="Beta-prop_TEP1_2nd"/>
</dbReference>
<dbReference type="InterPro" id="IPR056828">
    <property type="entry name" value="Beta-prop_TEP1_C"/>
</dbReference>
<dbReference type="InterPro" id="IPR025139">
    <property type="entry name" value="DUF4062"/>
</dbReference>
<dbReference type="InterPro" id="IPR045804">
    <property type="entry name" value="DUF5920"/>
</dbReference>
<dbReference type="InterPro" id="IPR007111">
    <property type="entry name" value="NACHT_NTPase"/>
</dbReference>
<dbReference type="InterPro" id="IPR027417">
    <property type="entry name" value="P-loop_NTPase"/>
</dbReference>
<dbReference type="InterPro" id="IPR052652">
    <property type="entry name" value="Telomerase_Complex_Comp"/>
</dbReference>
<dbReference type="InterPro" id="IPR008850">
    <property type="entry name" value="TEP1_N"/>
</dbReference>
<dbReference type="InterPro" id="IPR008858">
    <property type="entry name" value="TROVE_dom"/>
</dbReference>
<dbReference type="InterPro" id="IPR037214">
    <property type="entry name" value="TROVE_dom_sf"/>
</dbReference>
<dbReference type="InterPro" id="IPR015943">
    <property type="entry name" value="WD40/YVTN_repeat-like_dom_sf"/>
</dbReference>
<dbReference type="InterPro" id="IPR036322">
    <property type="entry name" value="WD40_repeat_dom_sf"/>
</dbReference>
<dbReference type="InterPro" id="IPR001680">
    <property type="entry name" value="WD40_rpt"/>
</dbReference>
<dbReference type="PANTHER" id="PTHR44791:SF1">
    <property type="entry name" value="TELOMERASE PROTEIN COMPONENT 1"/>
    <property type="match status" value="1"/>
</dbReference>
<dbReference type="PANTHER" id="PTHR44791">
    <property type="entry name" value="TELOMERASE PROTEIN COMPONENT 1 TEP1"/>
    <property type="match status" value="1"/>
</dbReference>
<dbReference type="Pfam" id="PF25047">
    <property type="entry name" value="Beta-prop_TEP1_2nd"/>
    <property type="match status" value="1"/>
</dbReference>
<dbReference type="Pfam" id="PF25048">
    <property type="entry name" value="Beta-prop_TEP1_C"/>
    <property type="match status" value="1"/>
</dbReference>
<dbReference type="Pfam" id="PF13271">
    <property type="entry name" value="DUF4062"/>
    <property type="match status" value="1"/>
</dbReference>
<dbReference type="Pfam" id="PF19334">
    <property type="entry name" value="DUF5920"/>
    <property type="match status" value="1"/>
</dbReference>
<dbReference type="Pfam" id="PF05729">
    <property type="entry name" value="NACHT"/>
    <property type="match status" value="1"/>
</dbReference>
<dbReference type="Pfam" id="PF05386">
    <property type="entry name" value="TEP1_N"/>
    <property type="match status" value="4"/>
</dbReference>
<dbReference type="Pfam" id="PF05731">
    <property type="entry name" value="TROVE"/>
    <property type="match status" value="1"/>
</dbReference>
<dbReference type="Pfam" id="PF00400">
    <property type="entry name" value="WD40"/>
    <property type="match status" value="4"/>
</dbReference>
<dbReference type="SMART" id="SM00320">
    <property type="entry name" value="WD40"/>
    <property type="match status" value="18"/>
</dbReference>
<dbReference type="SUPFAM" id="SSF63829">
    <property type="entry name" value="Calcium-dependent phosphotriesterase"/>
    <property type="match status" value="1"/>
</dbReference>
<dbReference type="SUPFAM" id="SSF52540">
    <property type="entry name" value="P-loop containing nucleoside triphosphate hydrolases"/>
    <property type="match status" value="1"/>
</dbReference>
<dbReference type="SUPFAM" id="SSF140864">
    <property type="entry name" value="TROVE domain-like"/>
    <property type="match status" value="1"/>
</dbReference>
<dbReference type="SUPFAM" id="SSF50978">
    <property type="entry name" value="WD40 repeat-like"/>
    <property type="match status" value="3"/>
</dbReference>
<dbReference type="PROSITE" id="PS50837">
    <property type="entry name" value="NACHT"/>
    <property type="match status" value="1"/>
</dbReference>
<dbReference type="PROSITE" id="PS51226">
    <property type="entry name" value="TEP1_N"/>
    <property type="match status" value="4"/>
</dbReference>
<dbReference type="PROSITE" id="PS50988">
    <property type="entry name" value="TROVE"/>
    <property type="match status" value="1"/>
</dbReference>
<dbReference type="PROSITE" id="PS00678">
    <property type="entry name" value="WD_REPEATS_1"/>
    <property type="match status" value="1"/>
</dbReference>
<dbReference type="PROSITE" id="PS50082">
    <property type="entry name" value="WD_REPEATS_2"/>
    <property type="match status" value="7"/>
</dbReference>
<dbReference type="PROSITE" id="PS50294">
    <property type="entry name" value="WD_REPEATS_REGION"/>
    <property type="match status" value="2"/>
</dbReference>
<feature type="chain" id="PRO_0000050982" description="Telomerase protein component 1">
    <location>
        <begin position="1"/>
        <end position="2627"/>
    </location>
</feature>
<feature type="repeat" description="TEP1 N-terminal 1">
    <location>
        <begin position="1"/>
        <end position="30"/>
    </location>
</feature>
<feature type="repeat" description="TEP1 N-terminal 2">
    <location>
        <begin position="31"/>
        <end position="60"/>
    </location>
</feature>
<feature type="repeat" description="TEP1 N-terminal 3">
    <location>
        <begin position="61"/>
        <end position="90"/>
    </location>
</feature>
<feature type="repeat" description="TEP1 N-terminal 4">
    <location>
        <begin position="91"/>
        <end position="120"/>
    </location>
</feature>
<feature type="domain" description="TROVE" evidence="3">
    <location>
        <begin position="223"/>
        <end position="676"/>
    </location>
</feature>
<feature type="domain" description="NACHT" evidence="2">
    <location>
        <begin position="1162"/>
        <end position="1490"/>
    </location>
</feature>
<feature type="repeat" description="WD 1">
    <location>
        <begin position="1411"/>
        <end position="1448"/>
    </location>
</feature>
<feature type="repeat" description="WD 2">
    <location>
        <begin position="1674"/>
        <end position="1713"/>
    </location>
</feature>
<feature type="repeat" description="WD 3">
    <location>
        <begin position="1716"/>
        <end position="1754"/>
    </location>
</feature>
<feature type="repeat" description="WD 4">
    <location>
        <begin position="1757"/>
        <end position="1796"/>
    </location>
</feature>
<feature type="repeat" description="WD 5">
    <location>
        <begin position="1798"/>
        <end position="1837"/>
    </location>
</feature>
<feature type="repeat" description="WD 6">
    <location>
        <begin position="1840"/>
        <end position="1879"/>
    </location>
</feature>
<feature type="repeat" description="WD 7">
    <location>
        <begin position="1882"/>
        <end position="1921"/>
    </location>
</feature>
<feature type="repeat" description="WD 8">
    <location>
        <begin position="1925"/>
        <end position="1964"/>
    </location>
</feature>
<feature type="repeat" description="WD 9">
    <location>
        <begin position="1967"/>
        <end position="2005"/>
    </location>
</feature>
<feature type="repeat" description="WD 10">
    <location>
        <begin position="2008"/>
        <end position="2047"/>
    </location>
</feature>
<feature type="repeat" description="WD 11">
    <location>
        <begin position="2059"/>
        <end position="2098"/>
    </location>
</feature>
<feature type="repeat" description="WD 12">
    <location>
        <begin position="2105"/>
        <end position="2143"/>
    </location>
</feature>
<feature type="repeat" description="WD 13">
    <location>
        <begin position="2146"/>
        <end position="2183"/>
    </location>
</feature>
<feature type="repeat" description="WD 14">
    <location>
        <begin position="2185"/>
        <end position="2233"/>
    </location>
</feature>
<feature type="repeat" description="WD 15">
    <location>
        <begin position="2236"/>
        <end position="2275"/>
    </location>
</feature>
<feature type="repeat" description="WD 16">
    <location>
        <begin position="2278"/>
        <end position="2317"/>
    </location>
</feature>
<feature type="repeat" description="WD 17">
    <location>
        <begin position="2319"/>
        <end position="2355"/>
    </location>
</feature>
<feature type="repeat" description="WD 18">
    <location>
        <begin position="2368"/>
        <end position="2417"/>
    </location>
</feature>
<feature type="repeat" description="WD 19">
    <location>
        <begin position="2459"/>
        <end position="2500"/>
    </location>
</feature>
<feature type="repeat" description="WD 20">
    <location>
        <begin position="2553"/>
        <end position="2590"/>
    </location>
</feature>
<feature type="repeat" description="WD 21">
    <location>
        <begin position="2592"/>
        <end position="2626"/>
    </location>
</feature>
<feature type="region of interest" description="Disordered" evidence="4">
    <location>
        <begin position="193"/>
        <end position="214"/>
    </location>
</feature>
<feature type="region of interest" description="Disordered" evidence="4">
    <location>
        <begin position="383"/>
        <end position="402"/>
    </location>
</feature>
<feature type="region of interest" description="Disordered" evidence="4">
    <location>
        <begin position="2506"/>
        <end position="2551"/>
    </location>
</feature>
<feature type="compositionally biased region" description="Basic residues" evidence="4">
    <location>
        <begin position="383"/>
        <end position="395"/>
    </location>
</feature>
<feature type="compositionally biased region" description="Polar residues" evidence="4">
    <location>
        <begin position="2506"/>
        <end position="2522"/>
    </location>
</feature>
<feature type="binding site" evidence="2">
    <location>
        <begin position="1168"/>
        <end position="1175"/>
    </location>
    <ligand>
        <name>ATP</name>
        <dbReference type="ChEBI" id="CHEBI:30616"/>
    </ligand>
</feature>
<feature type="splice variant" id="VSP_010359" description="In isoform 2." evidence="7">
    <original>ESSFLCASSDGILWNLAKCSPEGEWTTGNMWQ</original>
    <variation>ALMGSYGTWPNAAQKENGPQVTCGR</variation>
    <location>
        <begin position="2475"/>
        <end position="2506"/>
    </location>
</feature>
<feature type="sequence variant" id="VAR_018490" description="In dbSNP:rs1760897." evidence="6">
    <original>S</original>
    <variation>P</variation>
    <location>
        <position position="116"/>
    </location>
</feature>
<feature type="sequence variant" id="VAR_047631" description="In dbSNP:rs10083536.">
    <original>T</original>
    <variation>M</variation>
    <location>
        <position position="137"/>
    </location>
</feature>
<feature type="sequence variant" id="VAR_018491" description="In dbSNP:rs1760898.">
    <original>N</original>
    <variation>K</variation>
    <location>
        <position position="307"/>
    </location>
</feature>
<feature type="sequence variant" id="VAR_047632" description="In dbSNP:rs2228035.">
    <original>K</original>
    <variation>R</variation>
    <location>
        <position position="368"/>
    </location>
</feature>
<feature type="sequence variant" id="VAR_047633" description="In dbSNP:rs17111188.">
    <original>K</original>
    <variation>N</variation>
    <location>
        <position position="434"/>
    </location>
</feature>
<feature type="sequence variant" id="VAR_047634" description="In dbSNP:rs4982051.">
    <original>S</original>
    <variation>L</variation>
    <location>
        <position position="510"/>
    </location>
</feature>
<feature type="sequence variant" id="VAR_047635" description="In dbSNP:rs76466486." evidence="6">
    <original>A</original>
    <variation>G</variation>
    <location>
        <position position="553"/>
    </location>
</feature>
<feature type="sequence variant" id="VAR_047636" description="In dbSNP:rs34179031.">
    <original>R</original>
    <variation>H</variation>
    <location>
        <position position="933"/>
    </location>
</feature>
<feature type="sequence variant" id="VAR_018492" description="In dbSNP:rs1760903." evidence="6">
    <original>R</original>
    <variation>C</variation>
    <location>
        <position position="1055"/>
    </location>
</feature>
<feature type="sequence variant" id="VAR_047637" description="In dbSNP:rs2228041." evidence="6">
    <original>R</original>
    <variation>Q</variation>
    <location>
        <position position="1155"/>
    </location>
</feature>
<feature type="sequence variant" id="VAR_018493" description="In dbSNP:rs1760904." evidence="6">
    <original>S</original>
    <variation>P</variation>
    <location>
        <position position="1195"/>
    </location>
</feature>
<feature type="sequence variant" id="VAR_047638" description="In dbSNP:rs12886088.">
    <original>R</original>
    <variation>Q</variation>
    <location>
        <position position="1351"/>
    </location>
</feature>
<feature type="sequence variant" id="VAR_047639" description="In dbSNP:rs2229100.">
    <original>G</original>
    <variation>R</variation>
    <location>
        <position position="1408"/>
    </location>
</feature>
<feature type="sequence variant" id="VAR_018494" description="In dbSNP:rs1713457.">
    <original>S</original>
    <variation>T</variation>
    <location>
        <position position="1447"/>
    </location>
</feature>
<feature type="sequence variant" id="VAR_018495" description="In dbSNP:rs1713456.">
    <original>C</original>
    <variation>Y</variation>
    <location>
        <position position="1468"/>
    </location>
</feature>
<feature type="sequence variant" id="VAR_047640" description="In dbSNP:rs34401320.">
    <original>R</original>
    <variation>Q</variation>
    <location>
        <position position="1661"/>
    </location>
</feature>
<feature type="sequence variant" id="VAR_047641" description="In dbSNP:rs8022805.">
    <original>R</original>
    <variation>Q</variation>
    <location>
        <position position="1772"/>
    </location>
</feature>
<feature type="sequence variant" id="VAR_018496" description="In dbSNP:rs1713449.">
    <original>V</original>
    <variation>I</variation>
    <location>
        <position position="2214"/>
    </location>
</feature>
<feature type="sequence variant" id="VAR_047642" description="In dbSNP:rs35929175.">
    <original>A</original>
    <variation>S</variation>
    <location>
        <position position="2310"/>
    </location>
</feature>
<feature type="sequence variant" id="VAR_018497" description="In dbSNP:rs938886.">
    <original>I</original>
    <variation>M</variation>
    <location>
        <position position="2486"/>
    </location>
</feature>
<feature type="sequence variant" id="VAR_018498" description="In dbSNP:rs2104978.">
    <original>H</original>
    <variation>R</variation>
    <location>
        <position position="2562"/>
    </location>
</feature>
<sequence>MEKLHGHVSAHPDILSLENRCLAMLPDLQPLEKLHQHVSTHSDILSLKNQCLATLPDLKTMEKPHGYVSAHPDILSLENQCLATLSDLKTMEKPHGHVSAHPDILSLENRCLATLSSLKSTVSASPLFQSLQISHMTQADLYRVNNSNCLLSEPPSWRAQHFSKGLDLSTCPIALKSISATETAQEATLGRWFDSEEKKGAETQMPSYSLSLGEEEEVEDLAVKLTSGDSESHPEPTDHVLQEKKMALLSLLCSTLVSEVNMNNTSDPTLAAIFEICRELALLEPEFILKASLYARQQLNVRNVANNILAIAAFLPACRPHLRRYFCAIVQLPSDWIQVAELYQSLAEGDKNKLVPLPACLRTAMTDKFAQFDEYQLAKYNPRKHRAKRHPRRPPRSPGMEPPFSHRCFPRYIGFLREEQRKFEKAGDTVSEKKNPPRFTLKKLVQRLHIHKPAQHVQALLGYRYPSNLQLFSRSRLPGPWDSSRAGKRMKLSRPETWERELSLRGNKASVWEELIENGKLPFMAMLRNLCNLLRVGISSRHHELILQRLQHAKSVIHSRQFPFRFLNAHDAIDALEAQLRNQALPFPSNITLMRRILTRNEKNRPRRRFLCHLSRQQLRMAMRIPVLYEQLKREKLRVHKARQWKYDGEMLNRYRQALETAVNLSVKHSLPLLPGRTVLVYLTDANADRLCPKSNPQGPPLNYALLLIGMMITRAEQVDVVLCGGDTLKTAVLKAEEGILKTAIKLQAQVQEFDENDGWSLNTFGKYLLSLAGQRVPVDRVILLGQSMDDGMINVAKQLYWQRVNSKCLFVGILLRRVQYLSTDLNPNDVTLSGCTDAILKFIAEHGASHLLEHVGQMDKIFKIPPPPGKTGVQSLRPLEEDTPSPLAPVSQQGWRSIRLFISSTFRDMHGERDLLLRSVLPALQARAAPHRISLHGIDLRWGVTEEETRRNRQLEVCLGEVENAQLFVGILGSRYGYIPPSYNLPDHPHFHWAQQYPSGRSVTEMEVMQFLNRNQRLQPSAQALIYFRDSSFLSSVPDAWKSDFVSESEEAARRISELKSYLSRQKGITCRRYPCEWGGVAAGRPYVGGLEEFGQLVLQDVWNMIQKLYLQPGALLEQPVSIPDDDLVQATFQQLQKPPSPARPRLLQDTVQRLMLPHGRLSLVTGQSGQGKTAFLASLVSALQAPDGAKVASLVFFHFSGARPDQGLALTLLRRLCTYLRGQLKEPGALPSTYRSLVWELQQRLLPKSAESLHPGQTQVLIIDGADRLVDQNGQLISDWIPKKLPRCVHLVLSVSSDAGLGETLEQSQGAHVLALGPLEASARARLVREELALYGKRLEESPFNNQMRLLLVKRESGRPLYLRLVTDHLRLFTLYEQVSERLRTLPATVPLLLQHILSTLEKEHGPDVLPQALTALEVTRSGLTVDQLHGVLSVWRTLPKGTKSWEEAVAAGNSGDPYPMGPFACLVQSLRSLLGEGPLERPGARLCLPDGPLRTAAKRCYGKRPGLEDTAHILIAAQLWKTCDADASGTFRSCPPEALGDLPYHLLQSGNRGLLSKFLTNLHVVAAHLELGLVSRLLEAHALYASSVPKEEQKLPEADVAVFRTFLRQQASILSQYPRLLPQQAANQPLDSPLCHQASLLSRRWHLQHTLRWLNKPRTMKNQQSSSLSLAVSSSPTAVAFSTNGQRAAVGTANGTVYLLDLRTWQEEKSVVSGCDGISACLFLSDDTLFLTAFDGLLELWDLQHGCRVLQTKAHQYQITGCCLSPDCRLLATVCLGGCLKLWDTVRGQLAFQHTYPKSLNCVAFHPEGQVIATGSWAGSISFFQVDGLKVTKDLGAPGASIRTLAFNVPGGVVAVGRLDSMVELWAWREGARLAAFPAHHGFVAAALFLHAGCQLLTAGEDGKVQVWSGSLGRPRGHLGSLSLSPALSVALSPDGDRVAVGYRADGIRIYKISSGSQGAQGQALDVAVSALAWLSPKVLVSGAEDGSLQGWALKECSLQSLWLLSRFQKPVLGLATSQELLASASEDFTVQLWPRQLLTRPHKAEDFPCGTELRGHEGPVSCCSFSTDGGSLATGGRDRSLLCWDVRTPKTPVLIHSFPACHRDWVTGCAWTKDNLLISCSSDGSVGLWDPESGQRLGQFLGHQSAVSAVAAVEEHVVSVSRDGTLKVWDHQGVELTSIPAHSGPISHCAAAMEPRAAGQPGSELLVVTVGLDGATRLWHPLLVCQTHTLLGHSGPVRAAAVSETSGLMLTASEDGSVRLWQVPKEADDTCIPRSSAAVTAVAWAPDGSMAVSGNQAGELILWQEAKAVATAQAPGHIGALIWSSAHTFFVLSADEKISEWQVKLRKGSAPGNLSLHLNRILQEDLGVLTSLDWAPDGHFLILAKADLKLLCMKPGDAPSEIWSSYTENPMILSTHKEYGIFVLQPKDPGVLSFLRQKESGEFEERLNFDINLENPSRTLISITQAKPESESSFLCASSDGILWNLAKCSPEGEWTTGNMWQKKANTPETQTPGTDPSTCRESDASMDSDASMDSEPTPHLKTRQRRKIHSGSVTALHVLPELLVTASKDRDVKLWERPSMQLLGLFRCEGSVSCLEPWLGANSTLQLAVGDVQGNVYFLNWE</sequence>